<accession>Q8DZV4</accession>
<reference key="1">
    <citation type="journal article" date="2002" name="Proc. Natl. Acad. Sci. U.S.A.">
        <title>Complete genome sequence and comparative genomic analysis of an emerging human pathogen, serotype V Streptococcus agalactiae.</title>
        <authorList>
            <person name="Tettelin H."/>
            <person name="Masignani V."/>
            <person name="Cieslewicz M.J."/>
            <person name="Eisen J.A."/>
            <person name="Peterson S.N."/>
            <person name="Wessels M.R."/>
            <person name="Paulsen I.T."/>
            <person name="Nelson K.E."/>
            <person name="Margarit I."/>
            <person name="Read T.D."/>
            <person name="Madoff L.C."/>
            <person name="Wolf A.M."/>
            <person name="Beanan M.J."/>
            <person name="Brinkac L.M."/>
            <person name="Daugherty S.C."/>
            <person name="DeBoy R.T."/>
            <person name="Durkin A.S."/>
            <person name="Kolonay J.F."/>
            <person name="Madupu R."/>
            <person name="Lewis M.R."/>
            <person name="Radune D."/>
            <person name="Fedorova N.B."/>
            <person name="Scanlan D."/>
            <person name="Khouri H.M."/>
            <person name="Mulligan S."/>
            <person name="Carty H.A."/>
            <person name="Cline R.T."/>
            <person name="Van Aken S.E."/>
            <person name="Gill J."/>
            <person name="Scarselli M."/>
            <person name="Mora M."/>
            <person name="Iacobini E.T."/>
            <person name="Brettoni C."/>
            <person name="Galli G."/>
            <person name="Mariani M."/>
            <person name="Vegni F."/>
            <person name="Maione D."/>
            <person name="Rinaudo D."/>
            <person name="Rappuoli R."/>
            <person name="Telford J.L."/>
            <person name="Kasper D.L."/>
            <person name="Grandi G."/>
            <person name="Fraser C.M."/>
        </authorList>
    </citation>
    <scope>NUCLEOTIDE SEQUENCE [LARGE SCALE GENOMIC DNA]</scope>
    <source>
        <strain>ATCC BAA-611 / 2603 V/R</strain>
    </source>
</reference>
<sequence>MKMKKNIFLLTLLATVLLTLSGCANWIDKGQSITSVGSTALQPLVEAAADEFGKTNLGKTINVQGGGSGTGLSQVQSGAVQIGNSDLFAEEKDGIDAKKLKDHQVAVAGLAVIVNKKVNVKNLTTHQLRDIFAGKIKNWKEVGGQDLDISIINRAASSGSRATFDNTIMGNVAPIQSQEQDSNGMVKSIVSQTPGAISYLAFAYVDKSVGTLKLNGFAPTAKNVTTDNWKLWSYEHMYTKGNETGLTKEFLDYMKSDKVQSSIVQHMGYISINDMKVVKDAEGKVTPK</sequence>
<keyword id="KW-1003">Cell membrane</keyword>
<keyword id="KW-0449">Lipoprotein</keyword>
<keyword id="KW-0472">Membrane</keyword>
<keyword id="KW-0564">Palmitate</keyword>
<keyword id="KW-0592">Phosphate transport</keyword>
<keyword id="KW-1185">Reference proteome</keyword>
<keyword id="KW-0732">Signal</keyword>
<keyword id="KW-0813">Transport</keyword>
<feature type="signal peptide" evidence="2">
    <location>
        <begin position="1"/>
        <end position="22"/>
    </location>
</feature>
<feature type="chain" id="PRO_0000281668" description="Phosphate-binding protein PstS 1">
    <location>
        <begin position="23"/>
        <end position="288"/>
    </location>
</feature>
<feature type="lipid moiety-binding region" description="N-palmitoyl cysteine" evidence="2">
    <location>
        <position position="23"/>
    </location>
</feature>
<feature type="lipid moiety-binding region" description="S-diacylglycerol cysteine" evidence="2">
    <location>
        <position position="23"/>
    </location>
</feature>
<comment type="function">
    <text evidence="1">Part of the ABC transporter complex PstSACB involved in phosphate import.</text>
</comment>
<comment type="subunit">
    <text evidence="3">The complex is composed of two ATP-binding proteins (PstB), two transmembrane proteins (PstC and PstA) and a solute-binding protein (PstS).</text>
</comment>
<comment type="subcellular location">
    <subcellularLocation>
        <location evidence="3">Cell membrane</location>
        <topology evidence="3">Lipid-anchor</topology>
    </subcellularLocation>
</comment>
<comment type="similarity">
    <text evidence="3">Belongs to the PstS family.</text>
</comment>
<comment type="sequence caution" evidence="3">
    <conflict type="erroneous initiation">
        <sequence resource="EMBL-CDS" id="AAM99875"/>
    </conflict>
</comment>
<name>PSTS1_STRA5</name>
<organism>
    <name type="scientific">Streptococcus agalactiae serotype V (strain ATCC BAA-611 / 2603 V/R)</name>
    <dbReference type="NCBI Taxonomy" id="208435"/>
    <lineage>
        <taxon>Bacteria</taxon>
        <taxon>Bacillati</taxon>
        <taxon>Bacillota</taxon>
        <taxon>Bacilli</taxon>
        <taxon>Lactobacillales</taxon>
        <taxon>Streptococcaceae</taxon>
        <taxon>Streptococcus</taxon>
    </lineage>
</organism>
<gene>
    <name type="primary">pstS1</name>
    <name type="ordered locus">SAG0992</name>
</gene>
<evidence type="ECO:0000250" key="1"/>
<evidence type="ECO:0000255" key="2">
    <source>
        <dbReference type="PROSITE-ProRule" id="PRU00303"/>
    </source>
</evidence>
<evidence type="ECO:0000305" key="3"/>
<dbReference type="EMBL" id="AE009948">
    <property type="protein sequence ID" value="AAM99875.1"/>
    <property type="status" value="ALT_INIT"/>
    <property type="molecule type" value="Genomic_DNA"/>
</dbReference>
<dbReference type="RefSeq" id="NP_688003.1">
    <property type="nucleotide sequence ID" value="NC_004116.1"/>
</dbReference>
<dbReference type="RefSeq" id="WP_001873504.1">
    <property type="nucleotide sequence ID" value="NC_004116.1"/>
</dbReference>
<dbReference type="SMR" id="Q8DZV4"/>
<dbReference type="STRING" id="208435.SAG0992"/>
<dbReference type="KEGG" id="sag:SAG0992"/>
<dbReference type="PATRIC" id="fig|208435.3.peg.999"/>
<dbReference type="HOGENOM" id="CLU_026228_5_0_9"/>
<dbReference type="OrthoDB" id="9790048at2"/>
<dbReference type="Proteomes" id="UP000000821">
    <property type="component" value="Chromosome"/>
</dbReference>
<dbReference type="GO" id="GO:0005886">
    <property type="term" value="C:plasma membrane"/>
    <property type="evidence" value="ECO:0007669"/>
    <property type="project" value="UniProtKB-SubCell"/>
</dbReference>
<dbReference type="GO" id="GO:0042301">
    <property type="term" value="F:phosphate ion binding"/>
    <property type="evidence" value="ECO:0007669"/>
    <property type="project" value="InterPro"/>
</dbReference>
<dbReference type="GO" id="GO:0006817">
    <property type="term" value="P:phosphate ion transport"/>
    <property type="evidence" value="ECO:0007669"/>
    <property type="project" value="UniProtKB-KW"/>
</dbReference>
<dbReference type="CDD" id="cd13653">
    <property type="entry name" value="PBP2_phosphate_like_1"/>
    <property type="match status" value="1"/>
</dbReference>
<dbReference type="FunFam" id="3.40.190.10:FF:000107">
    <property type="entry name" value="Phosphate ABC transporter, phosphate-binding protein"/>
    <property type="match status" value="1"/>
</dbReference>
<dbReference type="Gene3D" id="3.40.190.10">
    <property type="entry name" value="Periplasmic binding protein-like II"/>
    <property type="match status" value="2"/>
</dbReference>
<dbReference type="InterPro" id="IPR024370">
    <property type="entry name" value="PBP_domain"/>
</dbReference>
<dbReference type="InterPro" id="IPR011862">
    <property type="entry name" value="Phos-bd"/>
</dbReference>
<dbReference type="InterPro" id="IPR050811">
    <property type="entry name" value="Phosphate_ABC_transporter"/>
</dbReference>
<dbReference type="NCBIfam" id="TIGR02136">
    <property type="entry name" value="ptsS_2"/>
    <property type="match status" value="1"/>
</dbReference>
<dbReference type="PANTHER" id="PTHR30570">
    <property type="entry name" value="PERIPLASMIC PHOSPHATE BINDING COMPONENT OF PHOSPHATE ABC TRANSPORTER"/>
    <property type="match status" value="1"/>
</dbReference>
<dbReference type="PANTHER" id="PTHR30570:SF4">
    <property type="entry name" value="PHOSPHATE-BINDING PROTEIN PSTS 1"/>
    <property type="match status" value="1"/>
</dbReference>
<dbReference type="Pfam" id="PF12849">
    <property type="entry name" value="PBP_like_2"/>
    <property type="match status" value="1"/>
</dbReference>
<dbReference type="SUPFAM" id="SSF53850">
    <property type="entry name" value="Periplasmic binding protein-like II"/>
    <property type="match status" value="1"/>
</dbReference>
<dbReference type="PROSITE" id="PS51257">
    <property type="entry name" value="PROKAR_LIPOPROTEIN"/>
    <property type="match status" value="1"/>
</dbReference>
<protein>
    <recommendedName>
        <fullName>Phosphate-binding protein PstS 1</fullName>
        <shortName>PBP 1</shortName>
    </recommendedName>
</protein>
<proteinExistence type="inferred from homology"/>